<proteinExistence type="inferred from homology"/>
<name>KTHY_SYMTH</name>
<accession>Q67JB0</accession>
<sequence>MSVFISFEGVDGSGKSTQIRLLLQYLDEQSVPYVFTREPGGTPIAEQIRRVLLDPANRGMSVITEALLFAAARAEHVSRTIRPALEEGKVVICDRFVDSSLVYQGVAGGLPVEFLTQINEMATGALRPHRTIVLDLAPEVALARRTGEEADRIERQSREYHQLVREGYLDLARAEPRRVKVVDASRSVEEVQKDIRRLVEEVLPRRFRGAGTRP</sequence>
<protein>
    <recommendedName>
        <fullName evidence="1">Thymidylate kinase</fullName>
        <ecNumber evidence="1">2.7.4.9</ecNumber>
    </recommendedName>
    <alternativeName>
        <fullName evidence="1">dTMP kinase</fullName>
    </alternativeName>
</protein>
<feature type="chain" id="PRO_0000155355" description="Thymidylate kinase">
    <location>
        <begin position="1"/>
        <end position="214"/>
    </location>
</feature>
<feature type="binding site" evidence="1">
    <location>
        <begin position="9"/>
        <end position="16"/>
    </location>
    <ligand>
        <name>ATP</name>
        <dbReference type="ChEBI" id="CHEBI:30616"/>
    </ligand>
</feature>
<evidence type="ECO:0000255" key="1">
    <source>
        <dbReference type="HAMAP-Rule" id="MF_00165"/>
    </source>
</evidence>
<comment type="function">
    <text evidence="1">Phosphorylation of dTMP to form dTDP in both de novo and salvage pathways of dTTP synthesis.</text>
</comment>
<comment type="catalytic activity">
    <reaction evidence="1">
        <text>dTMP + ATP = dTDP + ADP</text>
        <dbReference type="Rhea" id="RHEA:13517"/>
        <dbReference type="ChEBI" id="CHEBI:30616"/>
        <dbReference type="ChEBI" id="CHEBI:58369"/>
        <dbReference type="ChEBI" id="CHEBI:63528"/>
        <dbReference type="ChEBI" id="CHEBI:456216"/>
        <dbReference type="EC" id="2.7.4.9"/>
    </reaction>
</comment>
<comment type="similarity">
    <text evidence="1">Belongs to the thymidylate kinase family.</text>
</comment>
<keyword id="KW-0067">ATP-binding</keyword>
<keyword id="KW-0418">Kinase</keyword>
<keyword id="KW-0545">Nucleotide biosynthesis</keyword>
<keyword id="KW-0547">Nucleotide-binding</keyword>
<keyword id="KW-1185">Reference proteome</keyword>
<keyword id="KW-0808">Transferase</keyword>
<dbReference type="EC" id="2.7.4.9" evidence="1"/>
<dbReference type="EMBL" id="AP006840">
    <property type="protein sequence ID" value="BAD42240.1"/>
    <property type="molecule type" value="Genomic_DNA"/>
</dbReference>
<dbReference type="RefSeq" id="WP_011197371.1">
    <property type="nucleotide sequence ID" value="NC_006177.1"/>
</dbReference>
<dbReference type="SMR" id="Q67JB0"/>
<dbReference type="STRING" id="292459.STH3258"/>
<dbReference type="KEGG" id="sth:STH3258"/>
<dbReference type="eggNOG" id="COG0125">
    <property type="taxonomic scope" value="Bacteria"/>
</dbReference>
<dbReference type="HOGENOM" id="CLU_049131_0_2_9"/>
<dbReference type="OrthoDB" id="9774907at2"/>
<dbReference type="Proteomes" id="UP000000417">
    <property type="component" value="Chromosome"/>
</dbReference>
<dbReference type="GO" id="GO:0005829">
    <property type="term" value="C:cytosol"/>
    <property type="evidence" value="ECO:0007669"/>
    <property type="project" value="TreeGrafter"/>
</dbReference>
<dbReference type="GO" id="GO:0005524">
    <property type="term" value="F:ATP binding"/>
    <property type="evidence" value="ECO:0007669"/>
    <property type="project" value="UniProtKB-UniRule"/>
</dbReference>
<dbReference type="GO" id="GO:0004798">
    <property type="term" value="F:dTMP kinase activity"/>
    <property type="evidence" value="ECO:0007669"/>
    <property type="project" value="UniProtKB-UniRule"/>
</dbReference>
<dbReference type="GO" id="GO:0006233">
    <property type="term" value="P:dTDP biosynthetic process"/>
    <property type="evidence" value="ECO:0007669"/>
    <property type="project" value="InterPro"/>
</dbReference>
<dbReference type="GO" id="GO:0006235">
    <property type="term" value="P:dTTP biosynthetic process"/>
    <property type="evidence" value="ECO:0007669"/>
    <property type="project" value="UniProtKB-UniRule"/>
</dbReference>
<dbReference type="GO" id="GO:0006227">
    <property type="term" value="P:dUDP biosynthetic process"/>
    <property type="evidence" value="ECO:0007669"/>
    <property type="project" value="TreeGrafter"/>
</dbReference>
<dbReference type="CDD" id="cd01672">
    <property type="entry name" value="TMPK"/>
    <property type="match status" value="1"/>
</dbReference>
<dbReference type="FunFam" id="3.40.50.300:FF:000225">
    <property type="entry name" value="Thymidylate kinase"/>
    <property type="match status" value="1"/>
</dbReference>
<dbReference type="Gene3D" id="3.40.50.300">
    <property type="entry name" value="P-loop containing nucleotide triphosphate hydrolases"/>
    <property type="match status" value="1"/>
</dbReference>
<dbReference type="HAMAP" id="MF_00165">
    <property type="entry name" value="Thymidylate_kinase"/>
    <property type="match status" value="1"/>
</dbReference>
<dbReference type="InterPro" id="IPR027417">
    <property type="entry name" value="P-loop_NTPase"/>
</dbReference>
<dbReference type="InterPro" id="IPR039430">
    <property type="entry name" value="Thymidylate_kin-like_dom"/>
</dbReference>
<dbReference type="InterPro" id="IPR018095">
    <property type="entry name" value="Thymidylate_kin_CS"/>
</dbReference>
<dbReference type="InterPro" id="IPR018094">
    <property type="entry name" value="Thymidylate_kinase"/>
</dbReference>
<dbReference type="NCBIfam" id="TIGR00041">
    <property type="entry name" value="DTMP_kinase"/>
    <property type="match status" value="1"/>
</dbReference>
<dbReference type="PANTHER" id="PTHR10344">
    <property type="entry name" value="THYMIDYLATE KINASE"/>
    <property type="match status" value="1"/>
</dbReference>
<dbReference type="PANTHER" id="PTHR10344:SF4">
    <property type="entry name" value="UMP-CMP KINASE 2, MITOCHONDRIAL"/>
    <property type="match status" value="1"/>
</dbReference>
<dbReference type="Pfam" id="PF02223">
    <property type="entry name" value="Thymidylate_kin"/>
    <property type="match status" value="1"/>
</dbReference>
<dbReference type="SUPFAM" id="SSF52540">
    <property type="entry name" value="P-loop containing nucleoside triphosphate hydrolases"/>
    <property type="match status" value="1"/>
</dbReference>
<dbReference type="PROSITE" id="PS01331">
    <property type="entry name" value="THYMIDYLATE_KINASE"/>
    <property type="match status" value="1"/>
</dbReference>
<gene>
    <name evidence="1" type="primary">tmk</name>
    <name type="ordered locus">STH3258</name>
</gene>
<reference key="1">
    <citation type="journal article" date="2004" name="Nucleic Acids Res.">
        <title>Genome sequence of Symbiobacterium thermophilum, an uncultivable bacterium that depends on microbial commensalism.</title>
        <authorList>
            <person name="Ueda K."/>
            <person name="Yamashita A."/>
            <person name="Ishikawa J."/>
            <person name="Shimada M."/>
            <person name="Watsuji T."/>
            <person name="Morimura K."/>
            <person name="Ikeda H."/>
            <person name="Hattori M."/>
            <person name="Beppu T."/>
        </authorList>
    </citation>
    <scope>NUCLEOTIDE SEQUENCE [LARGE SCALE GENOMIC DNA]</scope>
    <source>
        <strain>DSM 24528 / JCM 14929 / IAM 14863 / T</strain>
    </source>
</reference>
<organism>
    <name type="scientific">Symbiobacterium thermophilum (strain DSM 24528 / JCM 14929 / IAM 14863 / T)</name>
    <dbReference type="NCBI Taxonomy" id="292459"/>
    <lineage>
        <taxon>Bacteria</taxon>
        <taxon>Bacillati</taxon>
        <taxon>Bacillota</taxon>
        <taxon>Clostridia</taxon>
        <taxon>Eubacteriales</taxon>
        <taxon>Symbiobacteriaceae</taxon>
        <taxon>Symbiobacterium</taxon>
    </lineage>
</organism>